<keyword id="KW-0963">Cytoplasm</keyword>
<keyword id="KW-0255">Endonuclease</keyword>
<keyword id="KW-0378">Hydrolase</keyword>
<keyword id="KW-0479">Metal-binding</keyword>
<keyword id="KW-0540">Nuclease</keyword>
<keyword id="KW-0819">tRNA processing</keyword>
<keyword id="KW-0862">Zinc</keyword>
<protein>
    <recommendedName>
        <fullName evidence="1">Ribonuclease P protein component 4</fullName>
        <shortName evidence="1">RNase P component 4</shortName>
        <ecNumber evidence="1">3.1.26.5</ecNumber>
    </recommendedName>
    <alternativeName>
        <fullName evidence="1">Rpp21</fullName>
    </alternativeName>
</protein>
<comment type="function">
    <text evidence="1">Part of ribonuclease P, a protein complex that generates mature tRNA molecules by cleaving their 5'-ends.</text>
</comment>
<comment type="catalytic activity">
    <reaction evidence="1">
        <text>Endonucleolytic cleavage of RNA, removing 5'-extranucleotides from tRNA precursor.</text>
        <dbReference type="EC" id="3.1.26.5"/>
    </reaction>
</comment>
<comment type="cofactor">
    <cofactor evidence="1">
        <name>Zn(2+)</name>
        <dbReference type="ChEBI" id="CHEBI:29105"/>
    </cofactor>
    <text evidence="1">Binds 1 zinc ion per subunit.</text>
</comment>
<comment type="subunit">
    <text evidence="1">Consists of a catalytic RNA component and at least 4-5 protein subunits.</text>
</comment>
<comment type="subcellular location">
    <subcellularLocation>
        <location evidence="1">Cytoplasm</location>
    </subcellularLocation>
</comment>
<comment type="similarity">
    <text evidence="1">Belongs to the eukaryotic/archaeal RNase P protein component 4 family.</text>
</comment>
<comment type="sequence caution" evidence="2">
    <conflict type="erroneous initiation">
        <sequence resource="EMBL-CDS" id="BAB59424"/>
    </conflict>
    <text>Extended N-terminus.</text>
</comment>
<sequence length="98" mass="11963">MSNNNYERLITKKDVYRVANERLYYLFSLAFQTGDERYIDLMERIGRRMDITLPQDIKRMYCKKCKKPYKNVRVRLKKNVITVTCLECGDIRRFQINR</sequence>
<name>RNP4_THEVO</name>
<dbReference type="EC" id="3.1.26.5" evidence="1"/>
<dbReference type="EMBL" id="BA000011">
    <property type="protein sequence ID" value="BAB59424.1"/>
    <property type="status" value="ALT_INIT"/>
    <property type="molecule type" value="Genomic_DNA"/>
</dbReference>
<dbReference type="SMR" id="Q97C23"/>
<dbReference type="STRING" id="273116.gene:9381056"/>
<dbReference type="PaxDb" id="273116-14324496"/>
<dbReference type="KEGG" id="tvo:TVG0293828"/>
<dbReference type="eggNOG" id="arCOG04345">
    <property type="taxonomic scope" value="Archaea"/>
</dbReference>
<dbReference type="HOGENOM" id="CLU_1493057_0_0_2"/>
<dbReference type="PhylomeDB" id="Q97C23"/>
<dbReference type="Proteomes" id="UP000001017">
    <property type="component" value="Chromosome"/>
</dbReference>
<dbReference type="GO" id="GO:0005737">
    <property type="term" value="C:cytoplasm"/>
    <property type="evidence" value="ECO:0007669"/>
    <property type="project" value="UniProtKB-SubCell"/>
</dbReference>
<dbReference type="GO" id="GO:0030677">
    <property type="term" value="C:ribonuclease P complex"/>
    <property type="evidence" value="ECO:0007669"/>
    <property type="project" value="UniProtKB-UniRule"/>
</dbReference>
<dbReference type="GO" id="GO:0004526">
    <property type="term" value="F:ribonuclease P activity"/>
    <property type="evidence" value="ECO:0007669"/>
    <property type="project" value="UniProtKB-UniRule"/>
</dbReference>
<dbReference type="GO" id="GO:0008270">
    <property type="term" value="F:zinc ion binding"/>
    <property type="evidence" value="ECO:0007669"/>
    <property type="project" value="UniProtKB-UniRule"/>
</dbReference>
<dbReference type="GO" id="GO:0001682">
    <property type="term" value="P:tRNA 5'-leader removal"/>
    <property type="evidence" value="ECO:0007669"/>
    <property type="project" value="UniProtKB-UniRule"/>
</dbReference>
<dbReference type="Gene3D" id="6.20.50.20">
    <property type="match status" value="1"/>
</dbReference>
<dbReference type="HAMAP" id="MF_00757">
    <property type="entry name" value="RNase_P_4"/>
    <property type="match status" value="1"/>
</dbReference>
<dbReference type="InterPro" id="IPR016432">
    <property type="entry name" value="RNP4"/>
</dbReference>
<dbReference type="InterPro" id="IPR007175">
    <property type="entry name" value="Rpr2/Snm1/Rpp21"/>
</dbReference>
<dbReference type="Pfam" id="PF04032">
    <property type="entry name" value="Rpr2"/>
    <property type="match status" value="1"/>
</dbReference>
<dbReference type="PIRSF" id="PIRSF004878">
    <property type="entry name" value="RNase_P_4"/>
    <property type="match status" value="1"/>
</dbReference>
<feature type="chain" id="PRO_0000153866" description="Ribonuclease P protein component 4">
    <location>
        <begin position="1"/>
        <end position="98"/>
    </location>
</feature>
<feature type="binding site" evidence="1">
    <location>
        <position position="62"/>
    </location>
    <ligand>
        <name>Zn(2+)</name>
        <dbReference type="ChEBI" id="CHEBI:29105"/>
    </ligand>
</feature>
<feature type="binding site" evidence="1">
    <location>
        <position position="65"/>
    </location>
    <ligand>
        <name>Zn(2+)</name>
        <dbReference type="ChEBI" id="CHEBI:29105"/>
    </ligand>
</feature>
<feature type="binding site" evidence="1">
    <location>
        <position position="85"/>
    </location>
    <ligand>
        <name>Zn(2+)</name>
        <dbReference type="ChEBI" id="CHEBI:29105"/>
    </ligand>
</feature>
<feature type="binding site" evidence="1">
    <location>
        <position position="88"/>
    </location>
    <ligand>
        <name>Zn(2+)</name>
        <dbReference type="ChEBI" id="CHEBI:29105"/>
    </ligand>
</feature>
<organism>
    <name type="scientific">Thermoplasma volcanium (strain ATCC 51530 / DSM 4299 / JCM 9571 / NBRC 15438 / GSS1)</name>
    <dbReference type="NCBI Taxonomy" id="273116"/>
    <lineage>
        <taxon>Archaea</taxon>
        <taxon>Methanobacteriati</taxon>
        <taxon>Thermoplasmatota</taxon>
        <taxon>Thermoplasmata</taxon>
        <taxon>Thermoplasmatales</taxon>
        <taxon>Thermoplasmataceae</taxon>
        <taxon>Thermoplasma</taxon>
    </lineage>
</organism>
<proteinExistence type="inferred from homology"/>
<evidence type="ECO:0000255" key="1">
    <source>
        <dbReference type="HAMAP-Rule" id="MF_00757"/>
    </source>
</evidence>
<evidence type="ECO:0000305" key="2"/>
<gene>
    <name evidence="1" type="primary">rnp4</name>
    <name type="ordered locus">TV0282</name>
    <name type="ORF">TVG0293828</name>
</gene>
<reference key="1">
    <citation type="journal article" date="2000" name="Proc. Natl. Acad. Sci. U.S.A.">
        <title>Archaeal adaptation to higher temperatures revealed by genomic sequence of Thermoplasma volcanium.</title>
        <authorList>
            <person name="Kawashima T."/>
            <person name="Amano N."/>
            <person name="Koike H."/>
            <person name="Makino S."/>
            <person name="Higuchi S."/>
            <person name="Kawashima-Ohya Y."/>
            <person name="Watanabe K."/>
            <person name="Yamazaki M."/>
            <person name="Kanehori K."/>
            <person name="Kawamoto T."/>
            <person name="Nunoshiba T."/>
            <person name="Yamamoto Y."/>
            <person name="Aramaki H."/>
            <person name="Makino K."/>
            <person name="Suzuki M."/>
        </authorList>
    </citation>
    <scope>NUCLEOTIDE SEQUENCE [LARGE SCALE GENOMIC DNA]</scope>
    <source>
        <strain>ATCC 51530 / DSM 4299 / JCM 9571 / NBRC 15438 / GSS1</strain>
    </source>
</reference>
<accession>Q97C23</accession>